<accession>Q9NL83</accession>
<protein>
    <recommendedName>
        <fullName>Orcokinin peptides type A</fullName>
    </recommendedName>
    <component>
        <recommendedName>
            <fullName>Orcomyotropin-like peptide</fullName>
        </recommendedName>
    </component>
    <component>
        <recommendedName>
            <fullName>Orcokinin</fullName>
        </recommendedName>
    </component>
    <component>
        <recommendedName>
            <fullName>Orcokinin-like peptide 1</fullName>
        </recommendedName>
    </component>
    <component>
        <recommendedName>
            <fullName>Orcokinin-like peptide 2</fullName>
        </recommendedName>
    </component>
    <component>
        <recommendedName>
            <fullName>Orcokinin-like peptide 3</fullName>
        </recommendedName>
    </component>
    <component>
        <recommendedName>
            <fullName>Orcokinin-like peptide 4</fullName>
        </recommendedName>
    </component>
</protein>
<sequence length="251" mass="29057">MTAQMFTIALLLSLSAIAAAGTIKTAPARTPSTQDDASFPPDGAPVKRFDAFTTGFGHSKRNFDEIDRSGFGFAKKNFDEIDRSGFGFNKRNFDEIDRSGFGFNKRNFDEIDRSGFGFNKRNFDEIDRSGFGFNKRNFDEIDRSGFGFNKRNFDEIDRSGFGFNKRNFDEIDRSGFGFVKRVYVPRYIANLYKRNFDEIDRSGFGFNKRNFDEIDRTGFGFHKRDYDVFPDKRNFDEIDRSGFGFVRRNVE</sequence>
<keyword id="KW-0165">Cleavage on pair of basic residues</keyword>
<keyword id="KW-0527">Neuropeptide</keyword>
<keyword id="KW-0964">Secreted</keyword>
<keyword id="KW-0732">Signal</keyword>
<organism evidence="4">
    <name type="scientific">Procambarus clarkii</name>
    <name type="common">Red swamp crayfish</name>
    <dbReference type="NCBI Taxonomy" id="6728"/>
    <lineage>
        <taxon>Eukaryota</taxon>
        <taxon>Metazoa</taxon>
        <taxon>Ecdysozoa</taxon>
        <taxon>Arthropoda</taxon>
        <taxon>Crustacea</taxon>
        <taxon>Multicrustacea</taxon>
        <taxon>Malacostraca</taxon>
        <taxon>Eumalacostraca</taxon>
        <taxon>Eucarida</taxon>
        <taxon>Decapoda</taxon>
        <taxon>Pleocyemata</taxon>
        <taxon>Astacidea</taxon>
        <taxon>Astacoidea</taxon>
        <taxon>Cambaridae</taxon>
        <taxon>Procambarus</taxon>
    </lineage>
</organism>
<feature type="signal peptide" evidence="1">
    <location>
        <begin position="1"/>
        <end position="20"/>
    </location>
</feature>
<feature type="propeptide" id="PRO_0000021918" evidence="2">
    <location>
        <begin position="21"/>
        <end position="46"/>
    </location>
</feature>
<feature type="peptide" id="PRO_0000021919" description="Orcomyotropin-like peptide">
    <location>
        <begin position="49"/>
        <end position="59"/>
    </location>
</feature>
<feature type="peptide" id="PRO_0000021920" description="Orcokinin-like peptide 1">
    <location>
        <begin position="62"/>
        <end position="74"/>
    </location>
</feature>
<feature type="peptide" id="PRO_0000021921" description="Orcokinin">
    <location>
        <begin position="77"/>
        <end position="89"/>
    </location>
</feature>
<feature type="peptide" id="PRO_0000021922" description="Orcokinin">
    <location>
        <begin position="92"/>
        <end position="104"/>
    </location>
</feature>
<feature type="peptide" id="PRO_0000021923" description="Orcokinin">
    <location>
        <begin position="107"/>
        <end position="119"/>
    </location>
</feature>
<feature type="peptide" id="PRO_0000021924" description="Orcokinin">
    <location>
        <begin position="122"/>
        <end position="134"/>
    </location>
</feature>
<feature type="peptide" id="PRO_0000021925" description="Orcokinin">
    <location>
        <begin position="137"/>
        <end position="149"/>
    </location>
</feature>
<feature type="peptide" id="PRO_0000021926" description="Orcokinin">
    <location>
        <begin position="152"/>
        <end position="164"/>
    </location>
</feature>
<feature type="peptide" id="PRO_0000021927" description="Orcokinin-like peptide 2">
    <location>
        <begin position="167"/>
        <end position="179"/>
    </location>
</feature>
<feature type="peptide" id="PRO_0000021928" description="Orcokinin-like peptide 3">
    <location>
        <begin position="182"/>
        <end position="192"/>
    </location>
</feature>
<feature type="peptide" id="PRO_0000021929" description="Orcokinin">
    <location>
        <begin position="195"/>
        <end position="207"/>
    </location>
</feature>
<feature type="peptide" id="PRO_0000021930" description="Orcokinin-like peptide 4">
    <location>
        <begin position="210"/>
        <end position="222"/>
    </location>
</feature>
<feature type="propeptide" id="PRO_0000021931" evidence="2">
    <location>
        <begin position="225"/>
        <end position="231"/>
    </location>
</feature>
<feature type="peptide" id="PRO_0000021932" description="Orcokinin-like peptide 2">
    <location>
        <begin position="234"/>
        <end position="246"/>
    </location>
</feature>
<feature type="propeptide" id="PRO_0000021933" evidence="2">
    <location>
        <begin position="249"/>
        <end position="251"/>
    </location>
</feature>
<proteinExistence type="evidence at protein level"/>
<dbReference type="EMBL" id="AB029168">
    <property type="protein sequence ID" value="BAA94753.1"/>
    <property type="molecule type" value="mRNA"/>
</dbReference>
<dbReference type="OrthoDB" id="6093641at2759"/>
<dbReference type="GO" id="GO:0005576">
    <property type="term" value="C:extracellular region"/>
    <property type="evidence" value="ECO:0007669"/>
    <property type="project" value="UniProtKB-SubCell"/>
</dbReference>
<dbReference type="GO" id="GO:0005184">
    <property type="term" value="F:neuropeptide hormone activity"/>
    <property type="evidence" value="ECO:0000303"/>
    <property type="project" value="UniProtKB"/>
</dbReference>
<dbReference type="GO" id="GO:0007218">
    <property type="term" value="P:neuropeptide signaling pathway"/>
    <property type="evidence" value="ECO:0007669"/>
    <property type="project" value="UniProtKB-KW"/>
</dbReference>
<dbReference type="Gene3D" id="2.160.20.80">
    <property type="entry name" value="E3 ubiquitin-protein ligase SopA"/>
    <property type="match status" value="1"/>
</dbReference>
<dbReference type="InterPro" id="IPR040384">
    <property type="entry name" value="ORCKA/B"/>
</dbReference>
<dbReference type="PANTHER" id="PTHR33864:SF1">
    <property type="entry name" value="NEUROPEPTIDE-LIKE PROTEIN"/>
    <property type="match status" value="1"/>
</dbReference>
<dbReference type="PANTHER" id="PTHR33864">
    <property type="entry name" value="NEUROPEPTIDE-LIKE PROTEIN-RELATED"/>
    <property type="match status" value="1"/>
</dbReference>
<dbReference type="SUPFAM" id="SSF141571">
    <property type="entry name" value="Pentapeptide repeat-like"/>
    <property type="match status" value="1"/>
</dbReference>
<name>ORCKA_PROCL</name>
<evidence type="ECO:0000255" key="1"/>
<evidence type="ECO:0000269" key="2">
    <source>
    </source>
</evidence>
<evidence type="ECO:0000305" key="3"/>
<evidence type="ECO:0000312" key="4">
    <source>
        <dbReference type="EMBL" id="BAA94753.1"/>
    </source>
</evidence>
<reference evidence="3" key="1">
    <citation type="journal article" date="2000" name="Gen. Comp. Endocrinol.">
        <title>Identification of orcokinin gene-related peptides in the brain of the crayfish Procambarus clarkii by the combination of MALDI-TOF and on-line capillary HPLC/Q-Tof mass spectrometries and molecular cloning.</title>
        <authorList>
            <person name="Yasuda-Kamatani Y."/>
            <person name="Yasuda A."/>
        </authorList>
    </citation>
    <scope>NUCLEOTIDE SEQUENCE [MRNA]</scope>
    <scope>MASS SPECTROMETRY</scope>
    <source>
        <tissue evidence="2">Olfactory bulb</tissue>
    </source>
</reference>
<comment type="function">
    <text evidence="3">Myotropic peptides that enhance both the frequency and amplitude of spontaneous hindgut contractions.</text>
</comment>
<comment type="subcellular location">
    <subcellularLocation>
        <location>Secreted</location>
    </subcellularLocation>
</comment>
<comment type="mass spectrometry" mass="1382.67" method="MALDI" evidence="2">
    <molecule>Orcomyotropin-like peptide</molecule>
</comment>
<comment type="mass spectrometry" mass="1475.17" method="MALDI" evidence="2">
    <molecule>Orcokinin-like peptide 1</molecule>
</comment>
<comment type="mass spectrometry" mass="1518.17" method="MALDI" evidence="2">
    <molecule>Orcokinin</molecule>
</comment>
<comment type="mass spectrometry" mass="1503.28" method="MALDI" evidence="2">
    <molecule>Orcokinin-like peptide 2</molecule>
</comment>
<comment type="mass spectrometry" mass="1371.55" method="MALDI" evidence="2">
    <molecule>Orcokinin-like peptide 3</molecule>
</comment>
<comment type="mass spectrometry" mass="1555.58" method="MALDI" evidence="2">
    <molecule>Orcokinin-like peptide 4</molecule>
</comment>
<comment type="similarity">
    <text evidence="3">Belongs to the orcokinin family.</text>
</comment>